<gene>
    <name type="ordered locus">MM_2627</name>
</gene>
<feature type="chain" id="PRO_0000120272" description="Probable Brix domain-containing ribosomal biogenesis protein">
    <location>
        <begin position="1"/>
        <end position="157"/>
    </location>
</feature>
<feature type="domain" description="Brix" evidence="1">
    <location>
        <begin position="1"/>
        <end position="157"/>
    </location>
</feature>
<protein>
    <recommendedName>
        <fullName evidence="1">Probable Brix domain-containing ribosomal biogenesis protein</fullName>
    </recommendedName>
</protein>
<accession>Q8PTT5</accession>
<organism>
    <name type="scientific">Methanosarcina mazei (strain ATCC BAA-159 / DSM 3647 / Goe1 / Go1 / JCM 11833 / OCM 88)</name>
    <name type="common">Methanosarcina frisia</name>
    <dbReference type="NCBI Taxonomy" id="192952"/>
    <lineage>
        <taxon>Archaea</taxon>
        <taxon>Methanobacteriati</taxon>
        <taxon>Methanobacteriota</taxon>
        <taxon>Stenosarchaea group</taxon>
        <taxon>Methanomicrobia</taxon>
        <taxon>Methanosarcinales</taxon>
        <taxon>Methanosarcinaceae</taxon>
        <taxon>Methanosarcina</taxon>
    </lineage>
</organism>
<keyword id="KW-0690">Ribosome biogenesis</keyword>
<comment type="function">
    <text evidence="1">Probably involved in the biogenesis of the ribosome.</text>
</comment>
<evidence type="ECO:0000255" key="1">
    <source>
        <dbReference type="HAMAP-Rule" id="MF_00699"/>
    </source>
</evidence>
<dbReference type="EMBL" id="AE008384">
    <property type="protein sequence ID" value="AAM32323.1"/>
    <property type="molecule type" value="Genomic_DNA"/>
</dbReference>
<dbReference type="RefSeq" id="WP_011034539.1">
    <property type="nucleotide sequence ID" value="NC_003901.1"/>
</dbReference>
<dbReference type="SMR" id="Q8PTT5"/>
<dbReference type="KEGG" id="mma:MM_2627"/>
<dbReference type="PATRIC" id="fig|192952.21.peg.3022"/>
<dbReference type="eggNOG" id="arCOG03247">
    <property type="taxonomic scope" value="Archaea"/>
</dbReference>
<dbReference type="HOGENOM" id="CLU_107897_2_0_2"/>
<dbReference type="Proteomes" id="UP000000595">
    <property type="component" value="Chromosome"/>
</dbReference>
<dbReference type="GO" id="GO:0019843">
    <property type="term" value="F:rRNA binding"/>
    <property type="evidence" value="ECO:0007669"/>
    <property type="project" value="InterPro"/>
</dbReference>
<dbReference type="GO" id="GO:0006364">
    <property type="term" value="P:rRNA processing"/>
    <property type="evidence" value="ECO:0007669"/>
    <property type="project" value="InterPro"/>
</dbReference>
<dbReference type="Gene3D" id="3.40.50.10480">
    <property type="entry name" value="Probable brix-domain ribosomal biogenesis protein"/>
    <property type="match status" value="1"/>
</dbReference>
<dbReference type="HAMAP" id="MF_00699">
    <property type="entry name" value="BriX"/>
    <property type="match status" value="1"/>
</dbReference>
<dbReference type="InterPro" id="IPR007109">
    <property type="entry name" value="Brix"/>
</dbReference>
<dbReference type="InterPro" id="IPR023548">
    <property type="entry name" value="Brix_dom_Rbsml_bgen_prot"/>
</dbReference>
<dbReference type="NCBIfam" id="NF002093">
    <property type="entry name" value="PRK00933.1-3"/>
    <property type="match status" value="1"/>
</dbReference>
<dbReference type="SMART" id="SM00879">
    <property type="entry name" value="Brix"/>
    <property type="match status" value="1"/>
</dbReference>
<dbReference type="SUPFAM" id="SSF52954">
    <property type="entry name" value="Class II aaRS ABD-related"/>
    <property type="match status" value="1"/>
</dbReference>
<dbReference type="PROSITE" id="PS50833">
    <property type="entry name" value="BRIX"/>
    <property type="match status" value="1"/>
</dbReference>
<name>BRIX_METMA</name>
<proteinExistence type="inferred from homology"/>
<reference key="1">
    <citation type="journal article" date="2002" name="J. Mol. Microbiol. Biotechnol.">
        <title>The genome of Methanosarcina mazei: evidence for lateral gene transfer between Bacteria and Archaea.</title>
        <authorList>
            <person name="Deppenmeier U."/>
            <person name="Johann A."/>
            <person name="Hartsch T."/>
            <person name="Merkl R."/>
            <person name="Schmitz R.A."/>
            <person name="Martinez-Arias R."/>
            <person name="Henne A."/>
            <person name="Wiezer A."/>
            <person name="Baeumer S."/>
            <person name="Jacobi C."/>
            <person name="Brueggemann H."/>
            <person name="Lienard T."/>
            <person name="Christmann A."/>
            <person name="Boemecke M."/>
            <person name="Steckel S."/>
            <person name="Bhattacharyya A."/>
            <person name="Lykidis A."/>
            <person name="Overbeek R."/>
            <person name="Klenk H.-P."/>
            <person name="Gunsalus R.P."/>
            <person name="Fritz H.-J."/>
            <person name="Gottschalk G."/>
        </authorList>
    </citation>
    <scope>NUCLEOTIDE SEQUENCE [LARGE SCALE GENOMIC DNA]</scope>
    <source>
        <strain>ATCC BAA-159 / DSM 3647 / Goe1 / Go1 / JCM 11833 / OCM 88</strain>
    </source>
</reference>
<sequence length="157" mass="17868">MLVTTSRKPSAKSRTLCKLLSRFTASRCISRGKMGMQELLDFTEGNTFIVVGEYHGNPGELSFHDNEGKLLFSIRFSDRYSEEIDSYWFPDVLPVLTGEGEIAEALESFFHFERVESDRVVQLPQNSLVMAIGDKEIDFMGSGKSLFKFNIKGFKKY</sequence>